<proteinExistence type="inferred from homology"/>
<sequence>MVQENKNFATAQAKSIRVSSRKLNLVAAFIRNMKVSEALVQLTFSPKRIAKVVKDCLQSAVANAENNLGLDIDRLVVTKATVGKALVMKRVMPRAKGRATRINKFFSNLYITVTEKEDN</sequence>
<evidence type="ECO:0000255" key="1">
    <source>
        <dbReference type="HAMAP-Rule" id="MF_01331"/>
    </source>
</evidence>
<evidence type="ECO:0000305" key="2"/>
<keyword id="KW-0687">Ribonucleoprotein</keyword>
<keyword id="KW-0689">Ribosomal protein</keyword>
<keyword id="KW-0694">RNA-binding</keyword>
<keyword id="KW-0699">rRNA-binding</keyword>
<accession>Q92GX1</accession>
<name>RL22_RICCN</name>
<dbReference type="EMBL" id="AE006914">
    <property type="protein sequence ID" value="AAL03539.1"/>
    <property type="molecule type" value="Genomic_DNA"/>
</dbReference>
<dbReference type="PIR" id="A97825">
    <property type="entry name" value="A97825"/>
</dbReference>
<dbReference type="RefSeq" id="WP_010977585.1">
    <property type="nucleotide sequence ID" value="NC_003103.1"/>
</dbReference>
<dbReference type="SMR" id="Q92GX1"/>
<dbReference type="GeneID" id="928143"/>
<dbReference type="KEGG" id="rco:RC1001"/>
<dbReference type="PATRIC" id="fig|272944.4.peg.1141"/>
<dbReference type="HOGENOM" id="CLU_083987_3_0_5"/>
<dbReference type="Proteomes" id="UP000000816">
    <property type="component" value="Chromosome"/>
</dbReference>
<dbReference type="GO" id="GO:0022625">
    <property type="term" value="C:cytosolic large ribosomal subunit"/>
    <property type="evidence" value="ECO:0007669"/>
    <property type="project" value="TreeGrafter"/>
</dbReference>
<dbReference type="GO" id="GO:0019843">
    <property type="term" value="F:rRNA binding"/>
    <property type="evidence" value="ECO:0007669"/>
    <property type="project" value="UniProtKB-UniRule"/>
</dbReference>
<dbReference type="GO" id="GO:0003735">
    <property type="term" value="F:structural constituent of ribosome"/>
    <property type="evidence" value="ECO:0007669"/>
    <property type="project" value="InterPro"/>
</dbReference>
<dbReference type="GO" id="GO:0006412">
    <property type="term" value="P:translation"/>
    <property type="evidence" value="ECO:0007669"/>
    <property type="project" value="UniProtKB-UniRule"/>
</dbReference>
<dbReference type="CDD" id="cd00336">
    <property type="entry name" value="Ribosomal_L22"/>
    <property type="match status" value="1"/>
</dbReference>
<dbReference type="Gene3D" id="3.90.470.10">
    <property type="entry name" value="Ribosomal protein L22/L17"/>
    <property type="match status" value="1"/>
</dbReference>
<dbReference type="HAMAP" id="MF_01331_B">
    <property type="entry name" value="Ribosomal_uL22_B"/>
    <property type="match status" value="1"/>
</dbReference>
<dbReference type="InterPro" id="IPR001063">
    <property type="entry name" value="Ribosomal_uL22"/>
</dbReference>
<dbReference type="InterPro" id="IPR005727">
    <property type="entry name" value="Ribosomal_uL22_bac/chlpt-type"/>
</dbReference>
<dbReference type="InterPro" id="IPR047867">
    <property type="entry name" value="Ribosomal_uL22_bac/org-type"/>
</dbReference>
<dbReference type="InterPro" id="IPR018260">
    <property type="entry name" value="Ribosomal_uL22_CS"/>
</dbReference>
<dbReference type="InterPro" id="IPR036394">
    <property type="entry name" value="Ribosomal_uL22_sf"/>
</dbReference>
<dbReference type="NCBIfam" id="TIGR01044">
    <property type="entry name" value="rplV_bact"/>
    <property type="match status" value="1"/>
</dbReference>
<dbReference type="PANTHER" id="PTHR13501">
    <property type="entry name" value="CHLOROPLAST 50S RIBOSOMAL PROTEIN L22-RELATED"/>
    <property type="match status" value="1"/>
</dbReference>
<dbReference type="PANTHER" id="PTHR13501:SF8">
    <property type="entry name" value="LARGE RIBOSOMAL SUBUNIT PROTEIN UL22M"/>
    <property type="match status" value="1"/>
</dbReference>
<dbReference type="Pfam" id="PF00237">
    <property type="entry name" value="Ribosomal_L22"/>
    <property type="match status" value="1"/>
</dbReference>
<dbReference type="SUPFAM" id="SSF54843">
    <property type="entry name" value="Ribosomal protein L22"/>
    <property type="match status" value="1"/>
</dbReference>
<dbReference type="PROSITE" id="PS00464">
    <property type="entry name" value="RIBOSOMAL_L22"/>
    <property type="match status" value="1"/>
</dbReference>
<comment type="function">
    <text evidence="1">This protein binds specifically to 23S rRNA; its binding is stimulated by other ribosomal proteins, e.g. L4, L17, and L20. It is important during the early stages of 50S assembly. It makes multiple contacts with different domains of the 23S rRNA in the assembled 50S subunit and ribosome (By similarity).</text>
</comment>
<comment type="function">
    <text evidence="1">The globular domain of the protein is located near the polypeptide exit tunnel on the outside of the subunit, while an extended beta-hairpin is found that lines the wall of the exit tunnel in the center of the 70S ribosome.</text>
</comment>
<comment type="subunit">
    <text evidence="1">Part of the 50S ribosomal subunit.</text>
</comment>
<comment type="similarity">
    <text evidence="1">Belongs to the universal ribosomal protein uL22 family.</text>
</comment>
<protein>
    <recommendedName>
        <fullName evidence="1">Large ribosomal subunit protein uL22</fullName>
    </recommendedName>
    <alternativeName>
        <fullName evidence="2">50S ribosomal protein L22</fullName>
    </alternativeName>
</protein>
<feature type="chain" id="PRO_0000125213" description="Large ribosomal subunit protein uL22">
    <location>
        <begin position="1"/>
        <end position="119"/>
    </location>
</feature>
<organism>
    <name type="scientific">Rickettsia conorii (strain ATCC VR-613 / Malish 7)</name>
    <dbReference type="NCBI Taxonomy" id="272944"/>
    <lineage>
        <taxon>Bacteria</taxon>
        <taxon>Pseudomonadati</taxon>
        <taxon>Pseudomonadota</taxon>
        <taxon>Alphaproteobacteria</taxon>
        <taxon>Rickettsiales</taxon>
        <taxon>Rickettsiaceae</taxon>
        <taxon>Rickettsieae</taxon>
        <taxon>Rickettsia</taxon>
        <taxon>spotted fever group</taxon>
    </lineage>
</organism>
<gene>
    <name evidence="1" type="primary">rplV</name>
    <name type="ordered locus">RC1001</name>
</gene>
<reference key="1">
    <citation type="journal article" date="2001" name="Science">
        <title>Mechanisms of evolution in Rickettsia conorii and R. prowazekii.</title>
        <authorList>
            <person name="Ogata H."/>
            <person name="Audic S."/>
            <person name="Renesto-Audiffren P."/>
            <person name="Fournier P.-E."/>
            <person name="Barbe V."/>
            <person name="Samson D."/>
            <person name="Roux V."/>
            <person name="Cossart P."/>
            <person name="Weissenbach J."/>
            <person name="Claverie J.-M."/>
            <person name="Raoult D."/>
        </authorList>
    </citation>
    <scope>NUCLEOTIDE SEQUENCE [LARGE SCALE GENOMIC DNA]</scope>
    <source>
        <strain>ATCC VR-613 / Malish 7</strain>
    </source>
</reference>